<proteinExistence type="inferred from homology"/>
<evidence type="ECO:0000255" key="1">
    <source>
        <dbReference type="HAMAP-Rule" id="MF_01346"/>
    </source>
</evidence>
<dbReference type="EC" id="7.1.2.2" evidence="1"/>
<dbReference type="EMBL" id="AM494475">
    <property type="protein sequence ID" value="CAM79644.1"/>
    <property type="molecule type" value="Genomic_DNA"/>
</dbReference>
<dbReference type="RefSeq" id="WP_011944557.1">
    <property type="nucleotide sequence ID" value="NC_009488.1"/>
</dbReference>
<dbReference type="SMR" id="A5CD07"/>
<dbReference type="KEGG" id="ots:OTBS_0578"/>
<dbReference type="eggNOG" id="COG0056">
    <property type="taxonomic scope" value="Bacteria"/>
</dbReference>
<dbReference type="HOGENOM" id="CLU_010091_2_1_5"/>
<dbReference type="Proteomes" id="UP000001565">
    <property type="component" value="Chromosome"/>
</dbReference>
<dbReference type="GO" id="GO:0005886">
    <property type="term" value="C:plasma membrane"/>
    <property type="evidence" value="ECO:0007669"/>
    <property type="project" value="UniProtKB-SubCell"/>
</dbReference>
<dbReference type="GO" id="GO:0045259">
    <property type="term" value="C:proton-transporting ATP synthase complex"/>
    <property type="evidence" value="ECO:0007669"/>
    <property type="project" value="UniProtKB-KW"/>
</dbReference>
<dbReference type="GO" id="GO:0043531">
    <property type="term" value="F:ADP binding"/>
    <property type="evidence" value="ECO:0007669"/>
    <property type="project" value="TreeGrafter"/>
</dbReference>
<dbReference type="GO" id="GO:0005524">
    <property type="term" value="F:ATP binding"/>
    <property type="evidence" value="ECO:0007669"/>
    <property type="project" value="UniProtKB-UniRule"/>
</dbReference>
<dbReference type="GO" id="GO:0046933">
    <property type="term" value="F:proton-transporting ATP synthase activity, rotational mechanism"/>
    <property type="evidence" value="ECO:0007669"/>
    <property type="project" value="UniProtKB-UniRule"/>
</dbReference>
<dbReference type="CDD" id="cd18113">
    <property type="entry name" value="ATP-synt_F1_alpha_C"/>
    <property type="match status" value="1"/>
</dbReference>
<dbReference type="CDD" id="cd18116">
    <property type="entry name" value="ATP-synt_F1_alpha_N"/>
    <property type="match status" value="1"/>
</dbReference>
<dbReference type="CDD" id="cd01132">
    <property type="entry name" value="F1-ATPase_alpha_CD"/>
    <property type="match status" value="1"/>
</dbReference>
<dbReference type="FunFam" id="1.20.150.20:FF:000001">
    <property type="entry name" value="ATP synthase subunit alpha"/>
    <property type="match status" value="1"/>
</dbReference>
<dbReference type="FunFam" id="3.40.50.300:FF:002432">
    <property type="entry name" value="ATP synthase subunit alpha, mitochondrial"/>
    <property type="match status" value="1"/>
</dbReference>
<dbReference type="Gene3D" id="2.40.30.20">
    <property type="match status" value="1"/>
</dbReference>
<dbReference type="Gene3D" id="1.20.150.20">
    <property type="entry name" value="ATP synthase alpha/beta chain, C-terminal domain"/>
    <property type="match status" value="1"/>
</dbReference>
<dbReference type="Gene3D" id="3.40.50.300">
    <property type="entry name" value="P-loop containing nucleotide triphosphate hydrolases"/>
    <property type="match status" value="1"/>
</dbReference>
<dbReference type="HAMAP" id="MF_01346">
    <property type="entry name" value="ATP_synth_alpha_bact"/>
    <property type="match status" value="1"/>
</dbReference>
<dbReference type="InterPro" id="IPR023366">
    <property type="entry name" value="ATP_synth_asu-like_sf"/>
</dbReference>
<dbReference type="InterPro" id="IPR000793">
    <property type="entry name" value="ATP_synth_asu_C"/>
</dbReference>
<dbReference type="InterPro" id="IPR038376">
    <property type="entry name" value="ATP_synth_asu_C_sf"/>
</dbReference>
<dbReference type="InterPro" id="IPR033732">
    <property type="entry name" value="ATP_synth_F1_a_nt-bd_dom"/>
</dbReference>
<dbReference type="InterPro" id="IPR005294">
    <property type="entry name" value="ATP_synth_F1_asu"/>
</dbReference>
<dbReference type="InterPro" id="IPR020003">
    <property type="entry name" value="ATPase_a/bsu_AS"/>
</dbReference>
<dbReference type="InterPro" id="IPR004100">
    <property type="entry name" value="ATPase_F1/V1/A1_a/bsu_N"/>
</dbReference>
<dbReference type="InterPro" id="IPR036121">
    <property type="entry name" value="ATPase_F1/V1/A1_a/bsu_N_sf"/>
</dbReference>
<dbReference type="InterPro" id="IPR000194">
    <property type="entry name" value="ATPase_F1/V1/A1_a/bsu_nucl-bd"/>
</dbReference>
<dbReference type="InterPro" id="IPR027417">
    <property type="entry name" value="P-loop_NTPase"/>
</dbReference>
<dbReference type="NCBIfam" id="TIGR00962">
    <property type="entry name" value="atpA"/>
    <property type="match status" value="1"/>
</dbReference>
<dbReference type="NCBIfam" id="NF009884">
    <property type="entry name" value="PRK13343.1"/>
    <property type="match status" value="1"/>
</dbReference>
<dbReference type="PANTHER" id="PTHR48082">
    <property type="entry name" value="ATP SYNTHASE SUBUNIT ALPHA, MITOCHONDRIAL"/>
    <property type="match status" value="1"/>
</dbReference>
<dbReference type="PANTHER" id="PTHR48082:SF2">
    <property type="entry name" value="ATP SYNTHASE SUBUNIT ALPHA, MITOCHONDRIAL"/>
    <property type="match status" value="1"/>
</dbReference>
<dbReference type="Pfam" id="PF00006">
    <property type="entry name" value="ATP-synt_ab"/>
    <property type="match status" value="1"/>
</dbReference>
<dbReference type="Pfam" id="PF00306">
    <property type="entry name" value="ATP-synt_ab_C"/>
    <property type="match status" value="1"/>
</dbReference>
<dbReference type="Pfam" id="PF02874">
    <property type="entry name" value="ATP-synt_ab_N"/>
    <property type="match status" value="1"/>
</dbReference>
<dbReference type="PIRSF" id="PIRSF039088">
    <property type="entry name" value="F_ATPase_subunit_alpha"/>
    <property type="match status" value="1"/>
</dbReference>
<dbReference type="SUPFAM" id="SSF47917">
    <property type="entry name" value="C-terminal domain of alpha and beta subunits of F1 ATP synthase"/>
    <property type="match status" value="1"/>
</dbReference>
<dbReference type="SUPFAM" id="SSF50615">
    <property type="entry name" value="N-terminal domain of alpha and beta subunits of F1 ATP synthase"/>
    <property type="match status" value="1"/>
</dbReference>
<dbReference type="SUPFAM" id="SSF52540">
    <property type="entry name" value="P-loop containing nucleoside triphosphate hydrolases"/>
    <property type="match status" value="1"/>
</dbReference>
<dbReference type="PROSITE" id="PS00152">
    <property type="entry name" value="ATPASE_ALPHA_BETA"/>
    <property type="match status" value="1"/>
</dbReference>
<name>ATPA_ORITB</name>
<protein>
    <recommendedName>
        <fullName evidence="1">ATP synthase subunit alpha</fullName>
        <ecNumber evidence="1">7.1.2.2</ecNumber>
    </recommendedName>
    <alternativeName>
        <fullName evidence="1">ATP synthase F1 sector subunit alpha</fullName>
    </alternativeName>
    <alternativeName>
        <fullName evidence="1">F-ATPase subunit alpha</fullName>
    </alternativeName>
</protein>
<comment type="function">
    <text evidence="1">Produces ATP from ADP in the presence of a proton gradient across the membrane. The alpha chain is a regulatory subunit.</text>
</comment>
<comment type="catalytic activity">
    <reaction evidence="1">
        <text>ATP + H2O + 4 H(+)(in) = ADP + phosphate + 5 H(+)(out)</text>
        <dbReference type="Rhea" id="RHEA:57720"/>
        <dbReference type="ChEBI" id="CHEBI:15377"/>
        <dbReference type="ChEBI" id="CHEBI:15378"/>
        <dbReference type="ChEBI" id="CHEBI:30616"/>
        <dbReference type="ChEBI" id="CHEBI:43474"/>
        <dbReference type="ChEBI" id="CHEBI:456216"/>
        <dbReference type="EC" id="7.1.2.2"/>
    </reaction>
</comment>
<comment type="subunit">
    <text evidence="1">F-type ATPases have 2 components, CF(1) - the catalytic core - and CF(0) - the membrane proton channel. CF(1) has five subunits: alpha(3), beta(3), gamma(1), delta(1), epsilon(1). CF(0) has three main subunits: a(1), b(2) and c(9-12). The alpha and beta chains form an alternating ring which encloses part of the gamma chain. CF(1) is attached to CF(0) by a central stalk formed by the gamma and epsilon chains, while a peripheral stalk is formed by the delta and b chains.</text>
</comment>
<comment type="subcellular location">
    <subcellularLocation>
        <location evidence="1">Cell inner membrane</location>
        <topology evidence="1">Peripheral membrane protein</topology>
    </subcellularLocation>
</comment>
<comment type="similarity">
    <text evidence="1">Belongs to the ATPase alpha/beta chains family.</text>
</comment>
<organism>
    <name type="scientific">Orientia tsutsugamushi (strain Boryong)</name>
    <name type="common">Rickettsia tsutsugamushi</name>
    <dbReference type="NCBI Taxonomy" id="357244"/>
    <lineage>
        <taxon>Bacteria</taxon>
        <taxon>Pseudomonadati</taxon>
        <taxon>Pseudomonadota</taxon>
        <taxon>Alphaproteobacteria</taxon>
        <taxon>Rickettsiales</taxon>
        <taxon>Rickettsiaceae</taxon>
        <taxon>Rickettsieae</taxon>
        <taxon>Orientia</taxon>
    </lineage>
</organism>
<accession>A5CD07</accession>
<reference key="1">
    <citation type="journal article" date="2007" name="Proc. Natl. Acad. Sci. U.S.A.">
        <title>The Orientia tsutsugamushi genome reveals massive proliferation of conjugative type IV secretion system and host-cell interaction genes.</title>
        <authorList>
            <person name="Cho N.-H."/>
            <person name="Kim H.-R."/>
            <person name="Lee J.-H."/>
            <person name="Kim S.-Y."/>
            <person name="Kim J."/>
            <person name="Cha S."/>
            <person name="Kim S.-Y."/>
            <person name="Darby A.C."/>
            <person name="Fuxelius H.-H."/>
            <person name="Yin J."/>
            <person name="Kim J.H."/>
            <person name="Kim J."/>
            <person name="Lee S.J."/>
            <person name="Koh Y.-S."/>
            <person name="Jang W.-J."/>
            <person name="Park K.-H."/>
            <person name="Andersson S.G.E."/>
            <person name="Choi M.-S."/>
            <person name="Kim I.-S."/>
        </authorList>
    </citation>
    <scope>NUCLEOTIDE SEQUENCE [LARGE SCALE GENOMIC DNA]</scope>
    <source>
        <strain>Boryong</strain>
    </source>
</reference>
<sequence>MQLKASEVYEALKQQLEDFDELSELSEVGYVISIGDGIAKVYGLSNAYSGEILQFSTGTKGIVFSLKDNLIEVVVIGSGDQIKQGSQVKRTQTSLKVPTGKELLGRVVDAIGNPIDGKGEFINPTYLDVEVKAPSVMCRDSVNEPMYTGIKAIDALIPIGKGQRELIIGDRQTGKTAIAIDIILNQKRFHLSDQEKEKVYCIYVAIGQKRSTVAQLVKKLQETGAMAYTTVVLSSASDAASLQYLAPYTGCAIGEYFRDNCMHALVIYDDLSKHAIAYRQISLLLRRPPAREAYPGDVFYLHSRLLERAAKLNKAKGEGSLTALPIVETQNSDVSAYIPTNIISITDGQIFLESELFYKGIKPALNVGISVSRVGAAAQIKAMKDIASSVKLELAQYHEMEAFSQFGADLDSSSMQLINRGRRLSELLKQSQYCPFPVEEQIIVLFAGINGYLDKIAVSKVKEFENNMLEYFRIHNPDIMNEIINTKKITEIISSKLHQILQEFVKSIEQCS</sequence>
<gene>
    <name evidence="1" type="primary">atpA</name>
    <name type="ordered locus">OTBS_0578</name>
</gene>
<keyword id="KW-0066">ATP synthesis</keyword>
<keyword id="KW-0067">ATP-binding</keyword>
<keyword id="KW-0997">Cell inner membrane</keyword>
<keyword id="KW-1003">Cell membrane</keyword>
<keyword id="KW-0139">CF(1)</keyword>
<keyword id="KW-0375">Hydrogen ion transport</keyword>
<keyword id="KW-0406">Ion transport</keyword>
<keyword id="KW-0472">Membrane</keyword>
<keyword id="KW-0547">Nucleotide-binding</keyword>
<keyword id="KW-1185">Reference proteome</keyword>
<keyword id="KW-1278">Translocase</keyword>
<keyword id="KW-0813">Transport</keyword>
<feature type="chain" id="PRO_0000302679" description="ATP synthase subunit alpha">
    <location>
        <begin position="1"/>
        <end position="512"/>
    </location>
</feature>
<feature type="binding site" evidence="1">
    <location>
        <begin position="169"/>
        <end position="176"/>
    </location>
    <ligand>
        <name>ATP</name>
        <dbReference type="ChEBI" id="CHEBI:30616"/>
    </ligand>
</feature>
<feature type="site" description="Required for activity" evidence="1">
    <location>
        <position position="370"/>
    </location>
</feature>